<proteinExistence type="evidence at transcript level"/>
<comment type="function">
    <text>Thought to be a Golgi-localized beta-glycan synthase that polymerize the backbones of noncellulosic polysaccharides (hemicelluloses) of plant cell wall.</text>
</comment>
<comment type="subcellular location">
    <subcellularLocation>
        <location evidence="2">Golgi apparatus membrane</location>
        <topology evidence="2">Multi-pass membrane protein</topology>
    </subcellularLocation>
</comment>
<comment type="similarity">
    <text evidence="2">Belongs to the glycosyltransferase 2 family. Plant cellulose synthase-like E subfamily.</text>
</comment>
<comment type="sequence caution" evidence="2">
    <conflict type="erroneous gene model prediction">
        <sequence resource="EMBL-CDS" id="BAF25384"/>
    </conflict>
</comment>
<gene>
    <name type="primary">CSLE6</name>
    <name type="ordered locus">Os09g0478300</name>
    <name type="ordered locus">Os09g0478200</name>
    <name type="ordered locus">LOC_Os09g30130</name>
    <name type="ORF">P0556A05.32</name>
</gene>
<protein>
    <recommendedName>
        <fullName>Cellulose synthase-like protein E6</fullName>
        <ecNumber>2.4.1.-</ecNumber>
    </recommendedName>
    <alternativeName>
        <fullName>OsCslE6</fullName>
    </alternativeName>
</protein>
<keyword id="KW-0961">Cell wall biogenesis/degradation</keyword>
<keyword id="KW-0328">Glycosyltransferase</keyword>
<keyword id="KW-0333">Golgi apparatus</keyword>
<keyword id="KW-0472">Membrane</keyword>
<keyword id="KW-1185">Reference proteome</keyword>
<keyword id="KW-0808">Transferase</keyword>
<keyword id="KW-0812">Transmembrane</keyword>
<keyword id="KW-1133">Transmembrane helix</keyword>
<dbReference type="EC" id="2.4.1.-"/>
<dbReference type="EMBL" id="AP005759">
    <property type="protein sequence ID" value="BAD46391.1"/>
    <property type="molecule type" value="Genomic_DNA"/>
</dbReference>
<dbReference type="EMBL" id="AP008215">
    <property type="protein sequence ID" value="BAF25384.1"/>
    <property type="status" value="ALT_SEQ"/>
    <property type="molecule type" value="Genomic_DNA"/>
</dbReference>
<dbReference type="EMBL" id="AP014965">
    <property type="status" value="NOT_ANNOTATED_CDS"/>
    <property type="molecule type" value="Genomic_DNA"/>
</dbReference>
<dbReference type="RefSeq" id="XP_015611688.1">
    <property type="nucleotide sequence ID" value="XM_015756202.1"/>
</dbReference>
<dbReference type="SMR" id="Q651X6"/>
<dbReference type="FunCoup" id="Q651X6">
    <property type="interactions" value="388"/>
</dbReference>
<dbReference type="STRING" id="39947.Q651X6"/>
<dbReference type="CAZy" id="GT2">
    <property type="family name" value="Glycosyltransferase Family 2"/>
</dbReference>
<dbReference type="PaxDb" id="39947-Q651X6"/>
<dbReference type="eggNOG" id="ENOG502QS7H">
    <property type="taxonomic scope" value="Eukaryota"/>
</dbReference>
<dbReference type="HOGENOM" id="CLU_001418_3_3_1"/>
<dbReference type="InParanoid" id="Q651X6"/>
<dbReference type="OrthoDB" id="72851at2759"/>
<dbReference type="Proteomes" id="UP000000763">
    <property type="component" value="Chromosome 9"/>
</dbReference>
<dbReference type="Proteomes" id="UP000059680">
    <property type="component" value="Chromosome 9"/>
</dbReference>
<dbReference type="GO" id="GO:0000139">
    <property type="term" value="C:Golgi membrane"/>
    <property type="evidence" value="ECO:0007669"/>
    <property type="project" value="UniProtKB-SubCell"/>
</dbReference>
<dbReference type="GO" id="GO:0005886">
    <property type="term" value="C:plasma membrane"/>
    <property type="evidence" value="ECO:0000318"/>
    <property type="project" value="GO_Central"/>
</dbReference>
<dbReference type="GO" id="GO:0016760">
    <property type="term" value="F:cellulose synthase (UDP-forming) activity"/>
    <property type="evidence" value="ECO:0007669"/>
    <property type="project" value="InterPro"/>
</dbReference>
<dbReference type="GO" id="GO:0016759">
    <property type="term" value="F:cellulose synthase activity"/>
    <property type="evidence" value="ECO:0000318"/>
    <property type="project" value="GO_Central"/>
</dbReference>
<dbReference type="GO" id="GO:0071555">
    <property type="term" value="P:cell wall organization"/>
    <property type="evidence" value="ECO:0007669"/>
    <property type="project" value="UniProtKB-KW"/>
</dbReference>
<dbReference type="GO" id="GO:0030244">
    <property type="term" value="P:cellulose biosynthetic process"/>
    <property type="evidence" value="ECO:0000318"/>
    <property type="project" value="GO_Central"/>
</dbReference>
<dbReference type="GO" id="GO:0009833">
    <property type="term" value="P:plant-type primary cell wall biogenesis"/>
    <property type="evidence" value="ECO:0000318"/>
    <property type="project" value="GO_Central"/>
</dbReference>
<dbReference type="FunFam" id="3.90.550.10:FF:000138">
    <property type="entry name" value="Cellulose synthase isolog"/>
    <property type="match status" value="1"/>
</dbReference>
<dbReference type="FunFam" id="3.90.550.10:FF:000173">
    <property type="entry name" value="Cellulose synthase-like protein E1"/>
    <property type="match status" value="1"/>
</dbReference>
<dbReference type="Gene3D" id="3.90.550.10">
    <property type="entry name" value="Spore Coat Polysaccharide Biosynthesis Protein SpsA, Chain A"/>
    <property type="match status" value="2"/>
</dbReference>
<dbReference type="InterPro" id="IPR005150">
    <property type="entry name" value="Cellulose_synth"/>
</dbReference>
<dbReference type="InterPro" id="IPR029044">
    <property type="entry name" value="Nucleotide-diphossugar_trans"/>
</dbReference>
<dbReference type="PANTHER" id="PTHR13301">
    <property type="entry name" value="X-BOX TRANSCRIPTION FACTOR-RELATED"/>
    <property type="match status" value="1"/>
</dbReference>
<dbReference type="Pfam" id="PF03552">
    <property type="entry name" value="Cellulose_synt"/>
    <property type="match status" value="2"/>
</dbReference>
<sequence>METTTTERRRLFATEKVGGRAVYRLQAATVAAGILLVLYYRATRVPAAGEGRAAWLGMAAAELWFAVYWVITQSVRWCPVRRRTFKNRLAERYKENLPGVDVFVCTADPHAEPPSLVISTILSVMAYNYPSEKISVYLSDDGGSILTFYALWEASMFAKKWLPFCRRYNIEPRSPAAYFSESEGHHNLCSPKEWSFIKNLYEEMRERIDSAVMSGKIPEEIKLKHKGFDEWNSEMTSKNHQPIVQVLIDGKSQNAVDDDGNVLPTLVYMAREKSPQYHHNFKAGALNALIRVSALISDSPVILNVDCDMYSNNSDSIRDALCFFLDEEMSHKIGFVQYPQNYNNMTKNNIYGNSLNVINHVEMRGLDSAGGCLYIGTGCFHRREILCGKKFSKDYKEDWGRGIKERGHENIDEIEEKAKSLATCTYELRTQWGNEIGVKYGCPVEDVITGLAIHCRGWESVYMEPQRAAFVGVAPATLAQTILQHKRWSEGNFTIFLSKHNTFLFGHGKISLQLQMGYCIYGLWAANSLPTIYYVMIPALGLVKGTPLFPEIMSPWATPFIYVFCVKTLYSLYEALLSGDTLKGWWNGQRMWMVKRITSYLYGFIDTIRKLLGLSKMSFEITAKVSDGDEAKRYEQEILEFGSSSPEFVIIATVALLNFVCLVAGLSKIMAGVWNVFLPQVILCGLIVITNIPIYEAMFVRKDKGRIPLPVTLASIGFVMLAFLLPIV</sequence>
<organism>
    <name type="scientific">Oryza sativa subsp. japonica</name>
    <name type="common">Rice</name>
    <dbReference type="NCBI Taxonomy" id="39947"/>
    <lineage>
        <taxon>Eukaryota</taxon>
        <taxon>Viridiplantae</taxon>
        <taxon>Streptophyta</taxon>
        <taxon>Embryophyta</taxon>
        <taxon>Tracheophyta</taxon>
        <taxon>Spermatophyta</taxon>
        <taxon>Magnoliopsida</taxon>
        <taxon>Liliopsida</taxon>
        <taxon>Poales</taxon>
        <taxon>Poaceae</taxon>
        <taxon>BOP clade</taxon>
        <taxon>Oryzoideae</taxon>
        <taxon>Oryzeae</taxon>
        <taxon>Oryzinae</taxon>
        <taxon>Oryza</taxon>
        <taxon>Oryza sativa</taxon>
    </lineage>
</organism>
<accession>Q651X6</accession>
<accession>Q0J0Y1</accession>
<feature type="chain" id="PRO_0000319400" description="Cellulose synthase-like protein E6">
    <location>
        <begin position="1"/>
        <end position="728"/>
    </location>
</feature>
<feature type="transmembrane region" description="Helical" evidence="1">
    <location>
        <begin position="21"/>
        <end position="43"/>
    </location>
</feature>
<feature type="transmembrane region" description="Helical" evidence="1">
    <location>
        <begin position="53"/>
        <end position="73"/>
    </location>
</feature>
<feature type="transmembrane region" description="Helical" evidence="1">
    <location>
        <begin position="523"/>
        <end position="543"/>
    </location>
</feature>
<feature type="transmembrane region" description="Helical" evidence="1">
    <location>
        <begin position="546"/>
        <end position="566"/>
    </location>
</feature>
<feature type="transmembrane region" description="Helical" evidence="1">
    <location>
        <begin position="646"/>
        <end position="666"/>
    </location>
</feature>
<feature type="transmembrane region" description="Helical" evidence="1">
    <location>
        <begin position="669"/>
        <end position="689"/>
    </location>
</feature>
<feature type="transmembrane region" description="Helical" evidence="1">
    <location>
        <begin position="707"/>
        <end position="727"/>
    </location>
</feature>
<feature type="active site" evidence="1">
    <location>
        <position position="141"/>
    </location>
</feature>
<feature type="active site" evidence="1">
    <location>
        <position position="446"/>
    </location>
</feature>
<name>CSLE6_ORYSJ</name>
<evidence type="ECO:0000255" key="1"/>
<evidence type="ECO:0000305" key="2"/>
<reference key="1">
    <citation type="journal article" date="2005" name="Nature">
        <title>The map-based sequence of the rice genome.</title>
        <authorList>
            <consortium name="International rice genome sequencing project (IRGSP)"/>
        </authorList>
    </citation>
    <scope>NUCLEOTIDE SEQUENCE [LARGE SCALE GENOMIC DNA]</scope>
    <source>
        <strain>cv. Nipponbare</strain>
    </source>
</reference>
<reference key="2">
    <citation type="journal article" date="2008" name="Nucleic Acids Res.">
        <title>The rice annotation project database (RAP-DB): 2008 update.</title>
        <authorList>
            <consortium name="The rice annotation project (RAP)"/>
        </authorList>
    </citation>
    <scope>GENOME REANNOTATION</scope>
    <source>
        <strain>cv. Nipponbare</strain>
    </source>
</reference>
<reference key="3">
    <citation type="journal article" date="2013" name="Rice">
        <title>Improvement of the Oryza sativa Nipponbare reference genome using next generation sequence and optical map data.</title>
        <authorList>
            <person name="Kawahara Y."/>
            <person name="de la Bastide M."/>
            <person name="Hamilton J.P."/>
            <person name="Kanamori H."/>
            <person name="McCombie W.R."/>
            <person name="Ouyang S."/>
            <person name="Schwartz D.C."/>
            <person name="Tanaka T."/>
            <person name="Wu J."/>
            <person name="Zhou S."/>
            <person name="Childs K.L."/>
            <person name="Davidson R.M."/>
            <person name="Lin H."/>
            <person name="Quesada-Ocampo L."/>
            <person name="Vaillancourt B."/>
            <person name="Sakai H."/>
            <person name="Lee S.S."/>
            <person name="Kim J."/>
            <person name="Numa H."/>
            <person name="Itoh T."/>
            <person name="Buell C.R."/>
            <person name="Matsumoto T."/>
        </authorList>
    </citation>
    <scope>GENOME REANNOTATION</scope>
    <source>
        <strain>cv. Nipponbare</strain>
    </source>
</reference>
<reference key="4">
    <citation type="journal article" date="2002" name="Plant Physiol.">
        <title>Cellulose synthase-like genes of rice.</title>
        <authorList>
            <person name="Hazen S.P."/>
            <person name="Scott-Craig J.S."/>
            <person name="Walton J.D."/>
        </authorList>
    </citation>
    <scope>GENE FAMILY</scope>
    <scope>NOMENCLATURE</scope>
</reference>